<reference key="1">
    <citation type="submission" date="2007-07" db="EMBL/GenBank/DDBJ databases">
        <title>Complete sequence of chromosome of Shewanella baltica OS185.</title>
        <authorList>
            <consortium name="US DOE Joint Genome Institute"/>
            <person name="Copeland A."/>
            <person name="Lucas S."/>
            <person name="Lapidus A."/>
            <person name="Barry K."/>
            <person name="Glavina del Rio T."/>
            <person name="Dalin E."/>
            <person name="Tice H."/>
            <person name="Pitluck S."/>
            <person name="Sims D."/>
            <person name="Brettin T."/>
            <person name="Bruce D."/>
            <person name="Detter J.C."/>
            <person name="Han C."/>
            <person name="Schmutz J."/>
            <person name="Larimer F."/>
            <person name="Land M."/>
            <person name="Hauser L."/>
            <person name="Kyrpides N."/>
            <person name="Mikhailova N."/>
            <person name="Brettar I."/>
            <person name="Rodrigues J."/>
            <person name="Konstantinidis K."/>
            <person name="Tiedje J."/>
            <person name="Richardson P."/>
        </authorList>
    </citation>
    <scope>NUCLEOTIDE SEQUENCE [LARGE SCALE GENOMIC DNA]</scope>
    <source>
        <strain>OS185</strain>
    </source>
</reference>
<keyword id="KW-0963">Cytoplasm</keyword>
<keyword id="KW-0275">Fatty acid biosynthesis</keyword>
<keyword id="KW-0276">Fatty acid metabolism</keyword>
<keyword id="KW-0444">Lipid biosynthesis</keyword>
<keyword id="KW-0443">Lipid metabolism</keyword>
<keyword id="KW-0460">Magnesium</keyword>
<keyword id="KW-0479">Metal-binding</keyword>
<keyword id="KW-0808">Transferase</keyword>
<organism>
    <name type="scientific">Shewanella baltica (strain OS185)</name>
    <dbReference type="NCBI Taxonomy" id="402882"/>
    <lineage>
        <taxon>Bacteria</taxon>
        <taxon>Pseudomonadati</taxon>
        <taxon>Pseudomonadota</taxon>
        <taxon>Gammaproteobacteria</taxon>
        <taxon>Alteromonadales</taxon>
        <taxon>Shewanellaceae</taxon>
        <taxon>Shewanella</taxon>
    </lineage>
</organism>
<accession>A6WKR1</accession>
<dbReference type="EC" id="2.7.8.7" evidence="1"/>
<dbReference type="EMBL" id="CP000753">
    <property type="protein sequence ID" value="ABS07400.1"/>
    <property type="molecule type" value="Genomic_DNA"/>
</dbReference>
<dbReference type="RefSeq" id="WP_012088606.1">
    <property type="nucleotide sequence ID" value="NC_009665.1"/>
</dbReference>
<dbReference type="SMR" id="A6WKR1"/>
<dbReference type="KEGG" id="sbm:Shew185_1249"/>
<dbReference type="HOGENOM" id="CLU_089696_3_1_6"/>
<dbReference type="GO" id="GO:0005737">
    <property type="term" value="C:cytoplasm"/>
    <property type="evidence" value="ECO:0007669"/>
    <property type="project" value="UniProtKB-SubCell"/>
</dbReference>
<dbReference type="GO" id="GO:0008897">
    <property type="term" value="F:holo-[acyl-carrier-protein] synthase activity"/>
    <property type="evidence" value="ECO:0007669"/>
    <property type="project" value="UniProtKB-UniRule"/>
</dbReference>
<dbReference type="GO" id="GO:0000287">
    <property type="term" value="F:magnesium ion binding"/>
    <property type="evidence" value="ECO:0007669"/>
    <property type="project" value="UniProtKB-UniRule"/>
</dbReference>
<dbReference type="GO" id="GO:0006633">
    <property type="term" value="P:fatty acid biosynthetic process"/>
    <property type="evidence" value="ECO:0007669"/>
    <property type="project" value="UniProtKB-UniRule"/>
</dbReference>
<dbReference type="FunFam" id="3.90.470.20:FF:000001">
    <property type="entry name" value="Holo-[acyl-carrier-protein] synthase"/>
    <property type="match status" value="1"/>
</dbReference>
<dbReference type="Gene3D" id="3.90.470.20">
    <property type="entry name" value="4'-phosphopantetheinyl transferase domain"/>
    <property type="match status" value="1"/>
</dbReference>
<dbReference type="HAMAP" id="MF_00101">
    <property type="entry name" value="AcpS"/>
    <property type="match status" value="1"/>
</dbReference>
<dbReference type="InterPro" id="IPR008278">
    <property type="entry name" value="4-PPantetheinyl_Trfase_dom"/>
</dbReference>
<dbReference type="InterPro" id="IPR037143">
    <property type="entry name" value="4-PPantetheinyl_Trfase_dom_sf"/>
</dbReference>
<dbReference type="InterPro" id="IPR002582">
    <property type="entry name" value="ACPS"/>
</dbReference>
<dbReference type="InterPro" id="IPR004568">
    <property type="entry name" value="Ppantetheine-prot_Trfase_dom"/>
</dbReference>
<dbReference type="NCBIfam" id="TIGR00516">
    <property type="entry name" value="acpS"/>
    <property type="match status" value="1"/>
</dbReference>
<dbReference type="NCBIfam" id="TIGR00556">
    <property type="entry name" value="pantethn_trn"/>
    <property type="match status" value="1"/>
</dbReference>
<dbReference type="Pfam" id="PF01648">
    <property type="entry name" value="ACPS"/>
    <property type="match status" value="1"/>
</dbReference>
<dbReference type="SUPFAM" id="SSF56214">
    <property type="entry name" value="4'-phosphopantetheinyl transferase"/>
    <property type="match status" value="1"/>
</dbReference>
<feature type="chain" id="PRO_1000008491" description="Holo-[acyl-carrier-protein] synthase">
    <location>
        <begin position="1"/>
        <end position="127"/>
    </location>
</feature>
<feature type="binding site" evidence="1">
    <location>
        <position position="9"/>
    </location>
    <ligand>
        <name>Mg(2+)</name>
        <dbReference type="ChEBI" id="CHEBI:18420"/>
    </ligand>
</feature>
<feature type="binding site" evidence="1">
    <location>
        <position position="58"/>
    </location>
    <ligand>
        <name>Mg(2+)</name>
        <dbReference type="ChEBI" id="CHEBI:18420"/>
    </ligand>
</feature>
<name>ACPS_SHEB8</name>
<gene>
    <name evidence="1" type="primary">acpS</name>
    <name type="ordered locus">Shew185_1249</name>
</gene>
<comment type="function">
    <text evidence="1">Transfers the 4'-phosphopantetheine moiety from coenzyme A to a Ser of acyl-carrier-protein.</text>
</comment>
<comment type="catalytic activity">
    <reaction evidence="1">
        <text>apo-[ACP] + CoA = holo-[ACP] + adenosine 3',5'-bisphosphate + H(+)</text>
        <dbReference type="Rhea" id="RHEA:12068"/>
        <dbReference type="Rhea" id="RHEA-COMP:9685"/>
        <dbReference type="Rhea" id="RHEA-COMP:9690"/>
        <dbReference type="ChEBI" id="CHEBI:15378"/>
        <dbReference type="ChEBI" id="CHEBI:29999"/>
        <dbReference type="ChEBI" id="CHEBI:57287"/>
        <dbReference type="ChEBI" id="CHEBI:58343"/>
        <dbReference type="ChEBI" id="CHEBI:64479"/>
        <dbReference type="EC" id="2.7.8.7"/>
    </reaction>
</comment>
<comment type="cofactor">
    <cofactor evidence="1">
        <name>Mg(2+)</name>
        <dbReference type="ChEBI" id="CHEBI:18420"/>
    </cofactor>
</comment>
<comment type="subcellular location">
    <subcellularLocation>
        <location evidence="1">Cytoplasm</location>
    </subcellularLocation>
</comment>
<comment type="similarity">
    <text evidence="1">Belongs to the P-Pant transferase superfamily. AcpS family.</text>
</comment>
<evidence type="ECO:0000255" key="1">
    <source>
        <dbReference type="HAMAP-Rule" id="MF_00101"/>
    </source>
</evidence>
<sequence>MAIVGLGTDIVEIERIQAHVARAGDKLAKRVLTEAELAIYTAHSQPSRYLAKRFAAKEAAAKALGTGIGRGVSFQHIHIGNNEDGAPTIHFTEGALTRLQQLKATVGHISIADEKSYAIATVIIESQ</sequence>
<proteinExistence type="inferred from homology"/>
<protein>
    <recommendedName>
        <fullName evidence="1">Holo-[acyl-carrier-protein] synthase</fullName>
        <shortName evidence="1">Holo-ACP synthase</shortName>
        <ecNumber evidence="1">2.7.8.7</ecNumber>
    </recommendedName>
    <alternativeName>
        <fullName evidence="1">4'-phosphopantetheinyl transferase AcpS</fullName>
    </alternativeName>
</protein>